<gene>
    <name type="primary">Mycs</name>
</gene>
<dbReference type="EMBL" id="M29069">
    <property type="protein sequence ID" value="AAA41645.1"/>
    <property type="molecule type" value="Genomic_DNA"/>
</dbReference>
<dbReference type="PIR" id="A36220">
    <property type="entry name" value="A36220"/>
</dbReference>
<dbReference type="RefSeq" id="NP_068609.1">
    <property type="nucleotide sequence ID" value="NM_021837.1"/>
</dbReference>
<dbReference type="SMR" id="P23999"/>
<dbReference type="FunCoup" id="P23999">
    <property type="interactions" value="65"/>
</dbReference>
<dbReference type="STRING" id="10116.ENSRNOP00000004118"/>
<dbReference type="PaxDb" id="10116-ENSRNOP00000004118"/>
<dbReference type="GeneID" id="24581"/>
<dbReference type="KEGG" id="rno:24581"/>
<dbReference type="UCSC" id="RGD:3133">
    <property type="organism name" value="rat"/>
</dbReference>
<dbReference type="AGR" id="RGD:3133"/>
<dbReference type="CTD" id="17870"/>
<dbReference type="RGD" id="3133">
    <property type="gene designation" value="Mycs"/>
</dbReference>
<dbReference type="eggNOG" id="KOG2588">
    <property type="taxonomic scope" value="Eukaryota"/>
</dbReference>
<dbReference type="InParanoid" id="P23999"/>
<dbReference type="OrthoDB" id="5964374at2759"/>
<dbReference type="PhylomeDB" id="P23999"/>
<dbReference type="PRO" id="PR:P23999"/>
<dbReference type="Proteomes" id="UP000002494">
    <property type="component" value="Unplaced"/>
</dbReference>
<dbReference type="GO" id="GO:0005634">
    <property type="term" value="C:nucleus"/>
    <property type="evidence" value="ECO:0007669"/>
    <property type="project" value="UniProtKB-SubCell"/>
</dbReference>
<dbReference type="GO" id="GO:0000981">
    <property type="term" value="F:DNA-binding transcription factor activity, RNA polymerase II-specific"/>
    <property type="evidence" value="ECO:0000318"/>
    <property type="project" value="GO_Central"/>
</dbReference>
<dbReference type="GO" id="GO:0046983">
    <property type="term" value="F:protein dimerization activity"/>
    <property type="evidence" value="ECO:0007669"/>
    <property type="project" value="InterPro"/>
</dbReference>
<dbReference type="GO" id="GO:0000978">
    <property type="term" value="F:RNA polymerase II cis-regulatory region sequence-specific DNA binding"/>
    <property type="evidence" value="ECO:0000318"/>
    <property type="project" value="GO_Central"/>
</dbReference>
<dbReference type="GO" id="GO:0006915">
    <property type="term" value="P:apoptotic process"/>
    <property type="evidence" value="ECO:0007669"/>
    <property type="project" value="UniProtKB-KW"/>
</dbReference>
<dbReference type="GO" id="GO:0006357">
    <property type="term" value="P:regulation of transcription by RNA polymerase II"/>
    <property type="evidence" value="ECO:0000318"/>
    <property type="project" value="GO_Central"/>
</dbReference>
<dbReference type="CDD" id="cd11456">
    <property type="entry name" value="bHLHzip_N-Myc_like"/>
    <property type="match status" value="1"/>
</dbReference>
<dbReference type="FunFam" id="4.10.280.10:FF:000019">
    <property type="entry name" value="Myc proto-oncogene protein"/>
    <property type="match status" value="1"/>
</dbReference>
<dbReference type="Gene3D" id="4.10.280.10">
    <property type="entry name" value="Helix-loop-helix DNA-binding domain"/>
    <property type="match status" value="1"/>
</dbReference>
<dbReference type="InterPro" id="IPR011598">
    <property type="entry name" value="bHLH_dom"/>
</dbReference>
<dbReference type="InterPro" id="IPR036638">
    <property type="entry name" value="HLH_DNA-bd_sf"/>
</dbReference>
<dbReference type="InterPro" id="IPR050433">
    <property type="entry name" value="Myc_transcription_factors"/>
</dbReference>
<dbReference type="InterPro" id="IPR002418">
    <property type="entry name" value="Tscrpt_reg_Myc"/>
</dbReference>
<dbReference type="InterPro" id="IPR012682">
    <property type="entry name" value="Tscrpt_reg_Myc_N"/>
</dbReference>
<dbReference type="PANTHER" id="PTHR45851">
    <property type="entry name" value="MYC PROTO-ONCOGENE"/>
    <property type="match status" value="1"/>
</dbReference>
<dbReference type="Pfam" id="PF00010">
    <property type="entry name" value="HLH"/>
    <property type="match status" value="1"/>
</dbReference>
<dbReference type="Pfam" id="PF01056">
    <property type="entry name" value="Myc_N"/>
    <property type="match status" value="1"/>
</dbReference>
<dbReference type="PIRSF" id="PIRSF001705">
    <property type="entry name" value="Myc_protein"/>
    <property type="match status" value="1"/>
</dbReference>
<dbReference type="PRINTS" id="PR00044">
    <property type="entry name" value="LEUZIPPRMYC"/>
</dbReference>
<dbReference type="SMART" id="SM00353">
    <property type="entry name" value="HLH"/>
    <property type="match status" value="1"/>
</dbReference>
<dbReference type="SUPFAM" id="SSF47459">
    <property type="entry name" value="HLH, helix-loop-helix DNA-binding domain"/>
    <property type="match status" value="1"/>
</dbReference>
<dbReference type="PROSITE" id="PS50888">
    <property type="entry name" value="BHLH"/>
    <property type="match status" value="1"/>
</dbReference>
<feature type="chain" id="PRO_0000127342" description="Protein S-Myc">
    <location>
        <begin position="1"/>
        <end position="429"/>
    </location>
</feature>
<feature type="domain" description="bHLH" evidence="2">
    <location>
        <begin position="346"/>
        <end position="398"/>
    </location>
</feature>
<feature type="region of interest" description="Disordered" evidence="3">
    <location>
        <begin position="301"/>
        <end position="325"/>
    </location>
</feature>
<feature type="region of interest" description="Leucine-zipper">
    <location>
        <begin position="398"/>
        <end position="419"/>
    </location>
</feature>
<feature type="modified residue" description="Phosphotyrosine; by Tyr-kinases" evidence="1">
    <location>
        <position position="36"/>
    </location>
</feature>
<comment type="function">
    <text>Has apoptosis-inducing activity.</text>
</comment>
<comment type="subunit">
    <text>Efficient DNA binding requires dimerization with another bHLH protein.</text>
</comment>
<comment type="subcellular location">
    <subcellularLocation>
        <location evidence="2">Nucleus</location>
    </subcellularLocation>
</comment>
<name>MYCS_RAT</name>
<evidence type="ECO:0000250" key="1"/>
<evidence type="ECO:0000255" key="2">
    <source>
        <dbReference type="PROSITE-ProRule" id="PRU00981"/>
    </source>
</evidence>
<evidence type="ECO:0000256" key="3">
    <source>
        <dbReference type="SAM" id="MobiDB-lite"/>
    </source>
</evidence>
<reference key="1">
    <citation type="journal article" date="1989" name="Proc. Natl. Acad. Sci. U.S.A.">
        <title>Isolation and characterization of s-myc, a member of the rat myc gene family.</title>
        <authorList>
            <person name="Sugiyama A."/>
            <person name="Kume A."/>
            <person name="Nemoto K."/>
            <person name="Lee S.Y."/>
            <person name="Asami Y."/>
            <person name="Nemoto F."/>
            <person name="Nishimura S."/>
            <person name="Kuchino Y."/>
        </authorList>
    </citation>
    <scope>NUCLEOTIDE SEQUENCE [GENOMIC DNA]</scope>
</reference>
<sequence length="429" mass="47002">MLSCTTSTMPGMICKNSDLEFDSLKPCFYPEDDDIYFGGRNSTPPGEDIWKKFELLPTPRLSPGRALAEDSLEPANWATEMLLPEADLWSNPAEEEDIFGLKGLSGSSSNPVVLQDCMWSGFSSREKPETVVSEKLPGGCGSLAVGAGTLVPGAAAATSAGHARSGTAGVGRRKAAWLTELSHLDSECVDSAVIFPANKRESMPVATIPASAGAAISLGDHQGLSSSLEDFLSNSGYVEEGGEEIYVVMLGETQFSKTVTKLPTAAHSENAALTPECAQSGELILKRSDLIQEQHNYAAPPLPYAEDARPLKKPRSQDPLGPLKCVLRPKAPRLRSRSNSDLEDIERRRNHNRMERQRRDIMRSSFLNLRDLVPELVHNEKAAKVVILKKATEYIHTLQTDESKLLVEREKLYERKQQLLEKIKQSAVC</sequence>
<proteinExistence type="inferred from homology"/>
<protein>
    <recommendedName>
        <fullName>Protein S-Myc</fullName>
    </recommendedName>
</protein>
<organism>
    <name type="scientific">Rattus norvegicus</name>
    <name type="common">Rat</name>
    <dbReference type="NCBI Taxonomy" id="10116"/>
    <lineage>
        <taxon>Eukaryota</taxon>
        <taxon>Metazoa</taxon>
        <taxon>Chordata</taxon>
        <taxon>Craniata</taxon>
        <taxon>Vertebrata</taxon>
        <taxon>Euteleostomi</taxon>
        <taxon>Mammalia</taxon>
        <taxon>Eutheria</taxon>
        <taxon>Euarchontoglires</taxon>
        <taxon>Glires</taxon>
        <taxon>Rodentia</taxon>
        <taxon>Myomorpha</taxon>
        <taxon>Muroidea</taxon>
        <taxon>Muridae</taxon>
        <taxon>Murinae</taxon>
        <taxon>Rattus</taxon>
    </lineage>
</organism>
<keyword id="KW-0053">Apoptosis</keyword>
<keyword id="KW-0238">DNA-binding</keyword>
<keyword id="KW-0539">Nucleus</keyword>
<keyword id="KW-0597">Phosphoprotein</keyword>
<keyword id="KW-1185">Reference proteome</keyword>
<accession>P23999</accession>